<accession>Q62703</accession>
<accession>Q6P6X5</accession>
<gene>
    <name type="primary">Rcn2</name>
    <name type="synonym">Erc55</name>
</gene>
<dbReference type="EMBL" id="U15734">
    <property type="protein sequence ID" value="AAA80197.1"/>
    <property type="molecule type" value="mRNA"/>
</dbReference>
<dbReference type="EMBL" id="BC061962">
    <property type="protein sequence ID" value="AAH61962.1"/>
    <property type="molecule type" value="mRNA"/>
</dbReference>
<dbReference type="PIR" id="I56519">
    <property type="entry name" value="I56519"/>
</dbReference>
<dbReference type="RefSeq" id="NP_058828.2">
    <property type="nucleotide sequence ID" value="NM_017132.2"/>
</dbReference>
<dbReference type="BioGRID" id="247896">
    <property type="interactions" value="2"/>
</dbReference>
<dbReference type="CORUM" id="Q62703"/>
<dbReference type="FunCoup" id="Q62703">
    <property type="interactions" value="4629"/>
</dbReference>
<dbReference type="IntAct" id="Q62703">
    <property type="interactions" value="2"/>
</dbReference>
<dbReference type="MINT" id="Q62703"/>
<dbReference type="STRING" id="10116.ENSRNOP00000021817"/>
<dbReference type="iPTMnet" id="Q62703"/>
<dbReference type="PhosphoSitePlus" id="Q62703"/>
<dbReference type="jPOST" id="Q62703"/>
<dbReference type="PaxDb" id="10116-ENSRNOP00000021817"/>
<dbReference type="GeneID" id="29218"/>
<dbReference type="KEGG" id="rno:29218"/>
<dbReference type="UCSC" id="RGD:3548">
    <property type="organism name" value="rat"/>
</dbReference>
<dbReference type="AGR" id="RGD:3548"/>
<dbReference type="CTD" id="5955"/>
<dbReference type="RGD" id="3548">
    <property type="gene designation" value="Rcn2"/>
</dbReference>
<dbReference type="VEuPathDB" id="HostDB:ENSRNOG00000015780"/>
<dbReference type="eggNOG" id="KOG4223">
    <property type="taxonomic scope" value="Eukaryota"/>
</dbReference>
<dbReference type="HOGENOM" id="CLU_044718_0_0_1"/>
<dbReference type="InParanoid" id="Q62703"/>
<dbReference type="OrthoDB" id="293868at2759"/>
<dbReference type="PhylomeDB" id="Q62703"/>
<dbReference type="PRO" id="PR:Q62703"/>
<dbReference type="Proteomes" id="UP000002494">
    <property type="component" value="Chromosome 8"/>
</dbReference>
<dbReference type="Bgee" id="ENSRNOG00000015780">
    <property type="expression patterns" value="Expressed in cerebellum and 20 other cell types or tissues"/>
</dbReference>
<dbReference type="GO" id="GO:0005783">
    <property type="term" value="C:endoplasmic reticulum"/>
    <property type="evidence" value="ECO:0000318"/>
    <property type="project" value="GO_Central"/>
</dbReference>
<dbReference type="GO" id="GO:0005788">
    <property type="term" value="C:endoplasmic reticulum lumen"/>
    <property type="evidence" value="ECO:0007669"/>
    <property type="project" value="UniProtKB-SubCell"/>
</dbReference>
<dbReference type="GO" id="GO:0005509">
    <property type="term" value="F:calcium ion binding"/>
    <property type="evidence" value="ECO:0000318"/>
    <property type="project" value="GO_Central"/>
</dbReference>
<dbReference type="CDD" id="cd16224">
    <property type="entry name" value="EFh_CREC_RCN2"/>
    <property type="match status" value="1"/>
</dbReference>
<dbReference type="FunFam" id="1.10.238.10:FF:000125">
    <property type="entry name" value="Reticulocalbin 2"/>
    <property type="match status" value="1"/>
</dbReference>
<dbReference type="FunFam" id="1.10.238.10:FF:000462">
    <property type="entry name" value="reticulocalbin-2"/>
    <property type="match status" value="1"/>
</dbReference>
<dbReference type="FunFam" id="1.10.238.10:FF:000170">
    <property type="entry name" value="reticulocalbin-2 isoform X1"/>
    <property type="match status" value="1"/>
</dbReference>
<dbReference type="Gene3D" id="1.10.238.10">
    <property type="entry name" value="EF-hand"/>
    <property type="match status" value="3"/>
</dbReference>
<dbReference type="InterPro" id="IPR011992">
    <property type="entry name" value="EF-hand-dom_pair"/>
</dbReference>
<dbReference type="InterPro" id="IPR018247">
    <property type="entry name" value="EF_Hand_1_Ca_BS"/>
</dbReference>
<dbReference type="InterPro" id="IPR002048">
    <property type="entry name" value="EF_hand_dom"/>
</dbReference>
<dbReference type="PANTHER" id="PTHR10827">
    <property type="entry name" value="RETICULOCALBIN"/>
    <property type="match status" value="1"/>
</dbReference>
<dbReference type="PANTHER" id="PTHR10827:SF78">
    <property type="entry name" value="RETICULOCALBIN-2"/>
    <property type="match status" value="1"/>
</dbReference>
<dbReference type="Pfam" id="PF13202">
    <property type="entry name" value="EF-hand_5"/>
    <property type="match status" value="1"/>
</dbReference>
<dbReference type="Pfam" id="PF13499">
    <property type="entry name" value="EF-hand_7"/>
    <property type="match status" value="2"/>
</dbReference>
<dbReference type="SMART" id="SM00054">
    <property type="entry name" value="EFh"/>
    <property type="match status" value="5"/>
</dbReference>
<dbReference type="SUPFAM" id="SSF47473">
    <property type="entry name" value="EF-hand"/>
    <property type="match status" value="2"/>
</dbReference>
<dbReference type="PROSITE" id="PS00018">
    <property type="entry name" value="EF_HAND_1"/>
    <property type="match status" value="5"/>
</dbReference>
<dbReference type="PROSITE" id="PS50222">
    <property type="entry name" value="EF_HAND_2"/>
    <property type="match status" value="5"/>
</dbReference>
<dbReference type="PROSITE" id="PS00014">
    <property type="entry name" value="ER_TARGET"/>
    <property type="match status" value="1"/>
</dbReference>
<proteinExistence type="evidence at protein level"/>
<comment type="function">
    <text>Not known. Binds calcium.</text>
</comment>
<comment type="subunit">
    <text evidence="4">Binds the snake venom phospholipase complex taipoxin.</text>
</comment>
<comment type="subcellular location">
    <subcellularLocation>
        <location>Endoplasmic reticulum lumen</location>
    </subcellularLocation>
</comment>
<comment type="tissue specificity">
    <text>Ubiquitous.</text>
</comment>
<comment type="similarity">
    <text evidence="5">Belongs to the CREC family.</text>
</comment>
<protein>
    <recommendedName>
        <fullName>Reticulocalbin-2</fullName>
    </recommendedName>
    <alternativeName>
        <fullName>Calcium-binding protein ERC-55</fullName>
    </alternativeName>
    <alternativeName>
        <fullName>Taipoxin-associated calcium-binding protein 49</fullName>
        <shortName>TCBP-49</shortName>
    </alternativeName>
</protein>
<evidence type="ECO:0000250" key="1">
    <source>
        <dbReference type="UniProtKB" id="Q14257"/>
    </source>
</evidence>
<evidence type="ECO:0000255" key="2">
    <source>
        <dbReference type="PROSITE-ProRule" id="PRU00448"/>
    </source>
</evidence>
<evidence type="ECO:0000255" key="3">
    <source>
        <dbReference type="PROSITE-ProRule" id="PRU10138"/>
    </source>
</evidence>
<evidence type="ECO:0000269" key="4">
    <source>
    </source>
</evidence>
<evidence type="ECO:0000305" key="5"/>
<name>RCN2_RAT</name>
<keyword id="KW-0106">Calcium</keyword>
<keyword id="KW-0903">Direct protein sequencing</keyword>
<keyword id="KW-0256">Endoplasmic reticulum</keyword>
<keyword id="KW-0479">Metal-binding</keyword>
<keyword id="KW-0597">Phosphoprotein</keyword>
<keyword id="KW-1185">Reference proteome</keyword>
<keyword id="KW-0677">Repeat</keyword>
<keyword id="KW-0732">Signal</keyword>
<sequence length="320" mass="37433">MRLGPRPAVLGLLLLLLLYAAVAGASKAEELHYPQGEHRADYDRETLLGVQEDVDEYVKLGHEEQQRRLQSIIKKIDSDSDGFLTENELSQWIQMSFKHYAMQEAKQQFVEYDKNSDGTVTWDEYNVQMYDRVIDFDENTALDDTEEESFRQLHLKDKKRFEKANQDSGPGLNLEEFIAFEHPEEVDYMTEFVIQEALEEHDKNGDGFVSLEEFLGDYRRDPTANEDPEWILVEKDRFVNDYDKDSDGRLDPQELLSWVVPNNQGIAQEEALHLIDEMDLNSDKKLSEEEILENQDLFLTSEATDYGRQLHDDYFYHDEL</sequence>
<feature type="signal peptide" evidence="4">
    <location>
        <begin position="1"/>
        <end position="25"/>
    </location>
</feature>
<feature type="chain" id="PRO_0000004150" description="Reticulocalbin-2">
    <location>
        <begin position="26"/>
        <end position="320"/>
    </location>
</feature>
<feature type="domain" description="EF-hand 1" evidence="2">
    <location>
        <begin position="64"/>
        <end position="99"/>
    </location>
</feature>
<feature type="domain" description="EF-hand 2" evidence="2">
    <location>
        <begin position="100"/>
        <end position="135"/>
    </location>
</feature>
<feature type="domain" description="EF-hand 3" evidence="5">
    <location>
        <begin position="150"/>
        <end position="185"/>
    </location>
</feature>
<feature type="domain" description="EF-hand 4" evidence="2">
    <location>
        <begin position="189"/>
        <end position="224"/>
    </location>
</feature>
<feature type="domain" description="EF-hand 5" evidence="2">
    <location>
        <begin position="230"/>
        <end position="265"/>
    </location>
</feature>
<feature type="domain" description="EF-hand 6" evidence="2">
    <location>
        <begin position="266"/>
        <end position="301"/>
    </location>
</feature>
<feature type="short sequence motif" description="Prevents secretion from ER" evidence="3">
    <location>
        <begin position="317"/>
        <end position="320"/>
    </location>
</feature>
<feature type="binding site" evidence="2">
    <location>
        <position position="77"/>
    </location>
    <ligand>
        <name>Ca(2+)</name>
        <dbReference type="ChEBI" id="CHEBI:29108"/>
        <label>1</label>
    </ligand>
</feature>
<feature type="binding site" evidence="2">
    <location>
        <position position="79"/>
    </location>
    <ligand>
        <name>Ca(2+)</name>
        <dbReference type="ChEBI" id="CHEBI:29108"/>
        <label>1</label>
    </ligand>
</feature>
<feature type="binding site" evidence="2">
    <location>
        <position position="81"/>
    </location>
    <ligand>
        <name>Ca(2+)</name>
        <dbReference type="ChEBI" id="CHEBI:29108"/>
        <label>1</label>
    </ligand>
</feature>
<feature type="binding site" evidence="2">
    <location>
        <position position="88"/>
    </location>
    <ligand>
        <name>Ca(2+)</name>
        <dbReference type="ChEBI" id="CHEBI:29108"/>
        <label>1</label>
    </ligand>
</feature>
<feature type="binding site" evidence="2">
    <location>
        <position position="113"/>
    </location>
    <ligand>
        <name>Ca(2+)</name>
        <dbReference type="ChEBI" id="CHEBI:29108"/>
        <label>2</label>
    </ligand>
</feature>
<feature type="binding site" evidence="2">
    <location>
        <position position="115"/>
    </location>
    <ligand>
        <name>Ca(2+)</name>
        <dbReference type="ChEBI" id="CHEBI:29108"/>
        <label>2</label>
    </ligand>
</feature>
<feature type="binding site" evidence="2">
    <location>
        <position position="117"/>
    </location>
    <ligand>
        <name>Ca(2+)</name>
        <dbReference type="ChEBI" id="CHEBI:29108"/>
        <label>2</label>
    </ligand>
</feature>
<feature type="binding site" evidence="2">
    <location>
        <position position="119"/>
    </location>
    <ligand>
        <name>Ca(2+)</name>
        <dbReference type="ChEBI" id="CHEBI:29108"/>
        <label>2</label>
    </ligand>
</feature>
<feature type="binding site" evidence="2">
    <location>
        <position position="124"/>
    </location>
    <ligand>
        <name>Ca(2+)</name>
        <dbReference type="ChEBI" id="CHEBI:29108"/>
        <label>2</label>
    </ligand>
</feature>
<feature type="binding site" evidence="5">
    <location>
        <position position="167"/>
    </location>
    <ligand>
        <name>Ca(2+)</name>
        <dbReference type="ChEBI" id="CHEBI:29108"/>
        <label>3</label>
    </ligand>
</feature>
<feature type="binding site" evidence="5">
    <location>
        <position position="176"/>
    </location>
    <ligand>
        <name>Ca(2+)</name>
        <dbReference type="ChEBI" id="CHEBI:29108"/>
        <label>3</label>
    </ligand>
</feature>
<feature type="binding site" evidence="2">
    <location>
        <position position="202"/>
    </location>
    <ligand>
        <name>Ca(2+)</name>
        <dbReference type="ChEBI" id="CHEBI:29108"/>
        <label>4</label>
    </ligand>
</feature>
<feature type="binding site" evidence="2">
    <location>
        <position position="204"/>
    </location>
    <ligand>
        <name>Ca(2+)</name>
        <dbReference type="ChEBI" id="CHEBI:29108"/>
        <label>4</label>
    </ligand>
</feature>
<feature type="binding site" evidence="2">
    <location>
        <position position="206"/>
    </location>
    <ligand>
        <name>Ca(2+)</name>
        <dbReference type="ChEBI" id="CHEBI:29108"/>
        <label>4</label>
    </ligand>
</feature>
<feature type="binding site" evidence="2">
    <location>
        <position position="213"/>
    </location>
    <ligand>
        <name>Ca(2+)</name>
        <dbReference type="ChEBI" id="CHEBI:29108"/>
        <label>4</label>
    </ligand>
</feature>
<feature type="binding site" evidence="2">
    <location>
        <position position="243"/>
    </location>
    <ligand>
        <name>Ca(2+)</name>
        <dbReference type="ChEBI" id="CHEBI:29108"/>
        <label>5</label>
    </ligand>
</feature>
<feature type="binding site" evidence="2">
    <location>
        <position position="245"/>
    </location>
    <ligand>
        <name>Ca(2+)</name>
        <dbReference type="ChEBI" id="CHEBI:29108"/>
        <label>5</label>
    </ligand>
</feature>
<feature type="binding site" evidence="2">
    <location>
        <position position="247"/>
    </location>
    <ligand>
        <name>Ca(2+)</name>
        <dbReference type="ChEBI" id="CHEBI:29108"/>
        <label>5</label>
    </ligand>
</feature>
<feature type="binding site" evidence="2">
    <location>
        <position position="249"/>
    </location>
    <ligand>
        <name>Ca(2+)</name>
        <dbReference type="ChEBI" id="CHEBI:29108"/>
        <label>5</label>
    </ligand>
</feature>
<feature type="binding site" evidence="2">
    <location>
        <position position="254"/>
    </location>
    <ligand>
        <name>Ca(2+)</name>
        <dbReference type="ChEBI" id="CHEBI:29108"/>
        <label>5</label>
    </ligand>
</feature>
<feature type="binding site" evidence="2">
    <location>
        <position position="279"/>
    </location>
    <ligand>
        <name>Ca(2+)</name>
        <dbReference type="ChEBI" id="CHEBI:29108"/>
        <label>6</label>
    </ligand>
</feature>
<feature type="binding site" evidence="2">
    <location>
        <position position="281"/>
    </location>
    <ligand>
        <name>Ca(2+)</name>
        <dbReference type="ChEBI" id="CHEBI:29108"/>
        <label>6</label>
    </ligand>
</feature>
<feature type="binding site" evidence="2">
    <location>
        <position position="283"/>
    </location>
    <ligand>
        <name>Ca(2+)</name>
        <dbReference type="ChEBI" id="CHEBI:29108"/>
        <label>6</label>
    </ligand>
</feature>
<feature type="binding site" evidence="2">
    <location>
        <position position="285"/>
    </location>
    <ligand>
        <name>Ca(2+)</name>
        <dbReference type="ChEBI" id="CHEBI:29108"/>
        <label>6</label>
    </ligand>
</feature>
<feature type="binding site" evidence="2">
    <location>
        <position position="290"/>
    </location>
    <ligand>
        <name>Ca(2+)</name>
        <dbReference type="ChEBI" id="CHEBI:29108"/>
        <label>6</label>
    </ligand>
</feature>
<feature type="modified residue" description="Phosphothreonine" evidence="1">
    <location>
        <position position="140"/>
    </location>
</feature>
<feature type="sequence conflict" description="In Ref. 1; AAA80197." evidence="5" ref="1">
    <location>
        <begin position="17"/>
        <end position="18"/>
    </location>
</feature>
<feature type="sequence conflict" description="In Ref. 1; AAA80197." evidence="5" ref="1">
    <original>T</original>
    <variation>A</variation>
    <location>
        <position position="46"/>
    </location>
</feature>
<reference key="1">
    <citation type="journal article" date="1995" name="J. Neurochem.">
        <title>Novel reticular calcium binding protein is purified on taipoxin columns.</title>
        <authorList>
            <person name="Dodds D."/>
            <person name="Schlimgen A.K."/>
            <person name="Lu S.Y."/>
            <person name="Perin M.S."/>
        </authorList>
    </citation>
    <scope>NUCLEOTIDE SEQUENCE [MRNA]</scope>
    <scope>PROTEIN SEQUENCE OF 26-38 AND 130-154</scope>
    <scope>SUBUNIT</scope>
    <source>
        <strain>Sprague-Dawley</strain>
    </source>
</reference>
<reference key="2">
    <citation type="journal article" date="2004" name="Genome Res.">
        <title>The status, quality, and expansion of the NIH full-length cDNA project: the Mammalian Gene Collection (MGC).</title>
        <authorList>
            <consortium name="The MGC Project Team"/>
        </authorList>
    </citation>
    <scope>NUCLEOTIDE SEQUENCE [LARGE SCALE MRNA]</scope>
    <source>
        <tissue>Prostate</tissue>
    </source>
</reference>
<reference key="3">
    <citation type="submission" date="2006-11" db="UniProtKB">
        <authorList>
            <person name="Lubec G."/>
            <person name="Afjehi-Sadat L."/>
        </authorList>
    </citation>
    <scope>PROTEIN SEQUENCE OF 133-151</scope>
    <scope>IDENTIFICATION BY MASS SPECTROMETRY</scope>
    <source>
        <strain>Sprague-Dawley</strain>
        <tissue>Spinal cord</tissue>
    </source>
</reference>
<organism>
    <name type="scientific">Rattus norvegicus</name>
    <name type="common">Rat</name>
    <dbReference type="NCBI Taxonomy" id="10116"/>
    <lineage>
        <taxon>Eukaryota</taxon>
        <taxon>Metazoa</taxon>
        <taxon>Chordata</taxon>
        <taxon>Craniata</taxon>
        <taxon>Vertebrata</taxon>
        <taxon>Euteleostomi</taxon>
        <taxon>Mammalia</taxon>
        <taxon>Eutheria</taxon>
        <taxon>Euarchontoglires</taxon>
        <taxon>Glires</taxon>
        <taxon>Rodentia</taxon>
        <taxon>Myomorpha</taxon>
        <taxon>Muroidea</taxon>
        <taxon>Muridae</taxon>
        <taxon>Murinae</taxon>
        <taxon>Rattus</taxon>
    </lineage>
</organism>